<gene>
    <name evidence="5 10" type="primary">IGHV1-46</name>
</gene>
<protein>
    <recommendedName>
        <fullName evidence="5 10">Immunoglobulin heavy variable 1-46</fullName>
    </recommendedName>
    <alternativeName>
        <fullName evidence="14">Ig heavy chain V-I region DOT</fullName>
    </alternativeName>
    <alternativeName>
        <fullName evidence="13">Ig heavy chain V-I region HG3</fullName>
    </alternativeName>
    <alternativeName>
        <fullName evidence="12">Ig heavy chain V-I region Mot</fullName>
    </alternativeName>
</protein>
<accession>P01743</accession>
<accession>A0A0B4J1V4</accession>
<accession>P06326</accession>
<accession>P80421</accession>
<organism>
    <name type="scientific">Homo sapiens</name>
    <name type="common">Human</name>
    <dbReference type="NCBI Taxonomy" id="9606"/>
    <lineage>
        <taxon>Eukaryota</taxon>
        <taxon>Metazoa</taxon>
        <taxon>Chordata</taxon>
        <taxon>Craniata</taxon>
        <taxon>Vertebrata</taxon>
        <taxon>Euteleostomi</taxon>
        <taxon>Mammalia</taxon>
        <taxon>Eutheria</taxon>
        <taxon>Euarchontoglires</taxon>
        <taxon>Primates</taxon>
        <taxon>Haplorrhini</taxon>
        <taxon>Catarrhini</taxon>
        <taxon>Hominidae</taxon>
        <taxon>Homo</taxon>
    </lineage>
</organism>
<feature type="signal peptide" evidence="3 4">
    <location>
        <begin position="1"/>
        <end position="19"/>
    </location>
</feature>
<feature type="chain" id="PRO_0000015244" description="Immunoglobulin heavy variable 1-46" evidence="3 4">
    <location>
        <begin position="20"/>
        <end position="117"/>
    </location>
</feature>
<feature type="domain" description="Ig-like" evidence="2">
    <location>
        <begin position="20"/>
        <end position="117" status="greater than"/>
    </location>
</feature>
<feature type="region of interest" description="Framework-1" evidence="1">
    <location>
        <begin position="20"/>
        <end position="44"/>
    </location>
</feature>
<feature type="region of interest" description="Complementarity-determining-1" evidence="1">
    <location>
        <begin position="45"/>
        <end position="52"/>
    </location>
</feature>
<feature type="region of interest" description="Framework-2" evidence="1">
    <location>
        <begin position="53"/>
        <end position="69"/>
    </location>
</feature>
<feature type="region of interest" description="Complementarity-determining-2" evidence="1">
    <location>
        <begin position="70"/>
        <end position="77"/>
    </location>
</feature>
<feature type="region of interest" description="Framework-3" evidence="1">
    <location>
        <begin position="78"/>
        <end position="115"/>
    </location>
</feature>
<feature type="region of interest" description="Complementarity-determining-3" evidence="1">
    <location>
        <begin position="116"/>
        <end position="117" status="greater than"/>
    </location>
</feature>
<feature type="disulfide bond" evidence="2">
    <location>
        <begin position="41"/>
        <end position="115"/>
    </location>
</feature>
<feature type="sequence variant" id="VAR_076712" description="In IMGT allele IGHV1-46*02.">
    <original>T</original>
    <variation>N</variation>
    <location>
        <position position="49"/>
    </location>
</feature>
<feature type="sequence conflict" description="In Ref. 4; AA sequence." evidence="11" ref="4">
    <original>Q</original>
    <variation>A</variation>
    <location>
        <position position="20"/>
    </location>
</feature>
<feature type="sequence conflict" description="In Ref. 4; AA sequence." evidence="11" ref="4">
    <original>AEVKK</original>
    <variation>VERKV</variation>
    <location>
        <begin position="28"/>
        <end position="32"/>
    </location>
</feature>
<feature type="sequence conflict" description="In Ref. 3; AA sequence." evidence="11" ref="3">
    <original>A</original>
    <variation>S</variation>
    <location>
        <position position="35"/>
    </location>
</feature>
<feature type="sequence conflict" description="In Ref. 3; AA sequence." evidence="11" ref="3">
    <original>VKV</original>
    <variation>ARL</variation>
    <location>
        <begin position="37"/>
        <end position="39"/>
    </location>
</feature>
<feature type="sequence conflict" description="In Ref. 4; AA sequence." evidence="11" ref="4">
    <original>KV</original>
    <variation>RI</variation>
    <location>
        <begin position="38"/>
        <end position="39"/>
    </location>
</feature>
<feature type="sequence conflict" description="In Ref. 3; AA sequence." evidence="11" ref="3">
    <original>A</original>
    <variation>V</variation>
    <location>
        <position position="43"/>
    </location>
</feature>
<feature type="sequence conflict" description="In Ref. 3; AA sequence." evidence="11" ref="3">
    <original>YT</original>
    <variation>DD</variation>
    <location>
        <begin position="46"/>
        <end position="47"/>
    </location>
</feature>
<feature type="sequence conflict" description="In Ref. 4; AA sequence." evidence="11" ref="4">
    <original>TFTS</original>
    <variation>AFEN</variation>
    <location>
        <begin position="47"/>
        <end position="50"/>
    </location>
</feature>
<feature type="sequence conflict" description="In Ref. 3; AA sequence." evidence="11" ref="3">
    <original>S</original>
    <variation>T</variation>
    <location>
        <position position="50"/>
    </location>
</feature>
<feature type="sequence conflict" description="In Ref. 3; AA sequence." evidence="11" ref="3">
    <original>YM</original>
    <variation>DI</variation>
    <location>
        <begin position="52"/>
        <end position="53"/>
    </location>
</feature>
<feature type="sequence conflict" description="In Ref. 4; AA sequence." evidence="11" ref="4">
    <original>M</original>
    <variation>I</variation>
    <location>
        <position position="53"/>
    </location>
</feature>
<feature type="sequence conflict" description="In Ref. 4; AA sequence." evidence="11" ref="4">
    <original>Q</original>
    <variation>L</variation>
    <location>
        <position position="62"/>
    </location>
</feature>
<feature type="sequence conflict" description="In Ref. 3; AA sequence." evidence="11" ref="3">
    <original>Q</original>
    <variation>R</variation>
    <location>
        <position position="62"/>
    </location>
</feature>
<feature type="sequence conflict" description="In Ref. 3; AA sequence." evidence="11" ref="3">
    <original>GIIN</original>
    <variation>AVVH</variation>
    <location>
        <begin position="68"/>
        <end position="71"/>
    </location>
</feature>
<feature type="sequence conflict" description="In Ref. 4; AA sequence." evidence="11" ref="4">
    <original>I</original>
    <variation>F</variation>
    <location>
        <position position="70"/>
    </location>
</feature>
<feature type="sequence conflict" description="In Ref. 4; AA sequence." evidence="11" ref="4">
    <original>SGGSTSYAQ</original>
    <variation>VAGAVSSE</variation>
    <location>
        <begin position="73"/>
        <end position="81"/>
    </location>
</feature>
<feature type="sequence conflict" description="In Ref. 3; AA sequence." evidence="11" ref="3">
    <original>GGS</original>
    <variation>DDR</variation>
    <location>
        <begin position="74"/>
        <end position="76"/>
    </location>
</feature>
<feature type="sequence conflict" description="In Ref. 3; AA sequence." evidence="11" ref="3">
    <original>S</original>
    <variation>T</variation>
    <location>
        <position position="78"/>
    </location>
</feature>
<feature type="sequence conflict" description="In Ref. 3; AA sequence." evidence="11" ref="3">
    <original>AQKF</original>
    <variation>GPRS</variation>
    <location>
        <begin position="80"/>
        <end position="83"/>
    </location>
</feature>
<feature type="sequence conflict" description="In Ref. 4; AA sequence." evidence="11" ref="4">
    <original>QGRVTMTR</original>
    <variation>RDRLVMSS</variation>
    <location>
        <begin position="84"/>
        <end position="91"/>
    </location>
</feature>
<feature type="sequence conflict" description="In Ref. 3; AA sequence." evidence="11" ref="3">
    <original>G</original>
    <variation>A</variation>
    <location>
        <position position="85"/>
    </location>
</feature>
<feature type="sequence conflict" description="In Ref. 3; AA sequence." evidence="11" ref="3">
    <original>V</original>
    <variation>F</variation>
    <location>
        <position position="87"/>
    </location>
</feature>
<feature type="sequence conflict" description="In Ref. 3; AA sequence." evidence="11" ref="3">
    <original>M</original>
    <variation>V</variation>
    <location>
        <position position="89"/>
    </location>
</feature>
<feature type="sequence conflict" description="In Ref. 3; AA sequence." evidence="11" ref="3">
    <original>T</original>
    <variation>S</variation>
    <location>
        <position position="93"/>
    </location>
</feature>
<feature type="sequence conflict" description="In Ref. 4; AA sequence." evidence="11" ref="4">
    <original>TS</original>
    <variation>AN</variation>
    <location>
        <begin position="95"/>
        <end position="96"/>
    </location>
</feature>
<feature type="sequence conflict" description="In Ref. 3; AA sequence." evidence="11" ref="3">
    <original>S</original>
    <variation>T</variation>
    <location>
        <position position="96"/>
    </location>
</feature>
<feature type="sequence conflict" description="In Ref. 4; AA sequence." evidence="11" ref="4">
    <original>YMELSS</original>
    <variation>SMQLRN</variation>
    <location>
        <begin position="99"/>
        <end position="104"/>
    </location>
</feature>
<feature type="sequence conflict" description="In Ref. 3; AA sequence." evidence="11" ref="3">
    <original>SS</original>
    <variation>TA</variation>
    <location>
        <begin position="103"/>
        <end position="104"/>
    </location>
</feature>
<feature type="sequence conflict" description="In Ref. 3; AA sequence." evidence="11" ref="3">
    <original>R</original>
    <variation>I</variation>
    <location>
        <position position="106"/>
    </location>
</feature>
<feature type="sequence conflict" description="In Ref. 3; AA sequence." evidence="11" ref="3">
    <original>E</original>
    <variation>A</variation>
    <location>
        <position position="108"/>
    </location>
</feature>
<feature type="sequence conflict" description="In Ref. 4; AA sequence." evidence="11" ref="4">
    <original>E</original>
    <variation>D</variation>
    <location>
        <position position="108"/>
    </location>
</feature>
<feature type="sequence conflict" description="In Ref. 4; AA sequence." evidence="11" ref="4">
    <original>AVYY</original>
    <variation>GRYF</variation>
    <location>
        <begin position="111"/>
        <end position="114"/>
    </location>
</feature>
<feature type="sequence conflict" description="In Ref. 3; AA sequence." evidence="11" ref="3">
    <original>V</original>
    <variation>I</variation>
    <location>
        <position position="112"/>
    </location>
</feature>
<feature type="non-terminal residue">
    <location>
        <position position="117"/>
    </location>
</feature>
<reference key="1">
    <citation type="journal article" date="1983" name="Proc. Natl. Acad. Sci. U.S.A.">
        <title>Evolutionary aspects of immunoglobulin heavy chain variable region (VH) gene subgroups.</title>
        <authorList>
            <person name="Rechavi G."/>
            <person name="Ram D."/>
            <person name="Glazer L."/>
            <person name="Zakut R."/>
            <person name="Givol D."/>
        </authorList>
    </citation>
    <scope>NUCLEOTIDE SEQUENCE [GENOMIC DNA] (IMGT ALLELE IGHV1-46*02)</scope>
    <scope>VARIANT ASN-49</scope>
</reference>
<reference key="2">
    <citation type="journal article" date="2003" name="Nature">
        <title>The DNA sequence and analysis of human chromosome 14.</title>
        <authorList>
            <person name="Heilig R."/>
            <person name="Eckenberg R."/>
            <person name="Petit J.-L."/>
            <person name="Fonknechten N."/>
            <person name="Da Silva C."/>
            <person name="Cattolico L."/>
            <person name="Levy M."/>
            <person name="Barbe V."/>
            <person name="De Berardinis V."/>
            <person name="Ureta-Vidal A."/>
            <person name="Pelletier E."/>
            <person name="Vico V."/>
            <person name="Anthouard V."/>
            <person name="Rowen L."/>
            <person name="Madan A."/>
            <person name="Qin S."/>
            <person name="Sun H."/>
            <person name="Du H."/>
            <person name="Pepin K."/>
            <person name="Artiguenave F."/>
            <person name="Robert C."/>
            <person name="Cruaud C."/>
            <person name="Bruels T."/>
            <person name="Jaillon O."/>
            <person name="Friedlander L."/>
            <person name="Samson G."/>
            <person name="Brottier P."/>
            <person name="Cure S."/>
            <person name="Segurens B."/>
            <person name="Aniere F."/>
            <person name="Samain S."/>
            <person name="Crespeau H."/>
            <person name="Abbasi N."/>
            <person name="Aiach N."/>
            <person name="Boscus D."/>
            <person name="Dickhoff R."/>
            <person name="Dors M."/>
            <person name="Dubois I."/>
            <person name="Friedman C."/>
            <person name="Gouyvenoux M."/>
            <person name="James R."/>
            <person name="Madan A."/>
            <person name="Mairey-Estrada B."/>
            <person name="Mangenot S."/>
            <person name="Martins N."/>
            <person name="Menard M."/>
            <person name="Oztas S."/>
            <person name="Ratcliffe A."/>
            <person name="Shaffer T."/>
            <person name="Trask B."/>
            <person name="Vacherie B."/>
            <person name="Bellemere C."/>
            <person name="Belser C."/>
            <person name="Besnard-Gonnet M."/>
            <person name="Bartol-Mavel D."/>
            <person name="Boutard M."/>
            <person name="Briez-Silla S."/>
            <person name="Combette S."/>
            <person name="Dufosse-Laurent V."/>
            <person name="Ferron C."/>
            <person name="Lechaplais C."/>
            <person name="Louesse C."/>
            <person name="Muselet D."/>
            <person name="Magdelenat G."/>
            <person name="Pateau E."/>
            <person name="Petit E."/>
            <person name="Sirvain-Trukniewicz P."/>
            <person name="Trybou A."/>
            <person name="Vega-Czarny N."/>
            <person name="Bataille E."/>
            <person name="Bluet E."/>
            <person name="Bordelais I."/>
            <person name="Dubois M."/>
            <person name="Dumont C."/>
            <person name="Guerin T."/>
            <person name="Haffray S."/>
            <person name="Hammadi R."/>
            <person name="Muanga J."/>
            <person name="Pellouin V."/>
            <person name="Robert D."/>
            <person name="Wunderle E."/>
            <person name="Gauguet G."/>
            <person name="Roy A."/>
            <person name="Sainte-Marthe L."/>
            <person name="Verdier J."/>
            <person name="Verdier-Discala C."/>
            <person name="Hillier L.W."/>
            <person name="Fulton L."/>
            <person name="McPherson J."/>
            <person name="Matsuda F."/>
            <person name="Wilson R."/>
            <person name="Scarpelli C."/>
            <person name="Gyapay G."/>
            <person name="Wincker P."/>
            <person name="Saurin W."/>
            <person name="Quetier F."/>
            <person name="Waterston R."/>
            <person name="Hood L."/>
            <person name="Weissenbach J."/>
        </authorList>
    </citation>
    <scope>NUCLEOTIDE SEQUENCE [LARGE SCALE GENOMIC DNA] (IMGT ALLELE IGHV1-46*01)</scope>
</reference>
<reference key="3">
    <citation type="journal article" date="1986" name="Mol. Immunol.">
        <title>Amino acid sequence of the variable region of heavy chain in immunoglobulin (Mot) having unusual papain cleavage sites.</title>
        <authorList>
            <person name="Kojima M."/>
            <person name="Koide T."/>
            <person name="Odani S."/>
            <person name="Ono T."/>
        </authorList>
    </citation>
    <scope>PROTEIN SEQUENCE OF 20-117</scope>
    <scope>VARIANT ASN-49</scope>
</reference>
<reference key="4">
    <citation type="journal article" date="1995" name="Eur. J. Biochem.">
        <title>Characterization of the two unique human anti-flavin monoclonal immunoglobulins.</title>
        <authorList>
            <person name="Stoppini M."/>
            <person name="Bellotti V."/>
            <person name="Negri A."/>
            <person name="Merlini G."/>
            <person name="Garver F."/>
            <person name="Ferri G."/>
        </authorList>
    </citation>
    <scope>PROTEIN SEQUENCE OF 20-117</scope>
</reference>
<reference key="5">
    <citation type="journal article" date="2001" name="Exp. Clin. Immunogenet.">
        <title>Nomenclature of the human immunoglobulin heavy (IGH) genes.</title>
        <authorList>
            <person name="Lefranc M.P."/>
        </authorList>
    </citation>
    <scope>NOMENCLATURE</scope>
</reference>
<reference key="6">
    <citation type="book" date="2001" name="The Immunoglobulin FactsBook.">
        <title>The Immunoglobulin FactsBook.</title>
        <editorList>
            <person name="Lefranc M.P."/>
            <person name="Lefranc G."/>
        </editorList>
        <authorList>
            <person name="Lefranc M.P."/>
            <person name="Lefranc G."/>
        </authorList>
    </citation>
    <scope>NOMENCLATURE</scope>
</reference>
<reference key="7">
    <citation type="journal article" date="2007" name="Annu. Rev. Genet.">
        <title>Immunoglobulin somatic hypermutation.</title>
        <authorList>
            <person name="Teng G."/>
            <person name="Papavasiliou F.N."/>
        </authorList>
    </citation>
    <scope>REVIEW ON SOMATIC HYPERMUTATION</scope>
</reference>
<reference key="8">
    <citation type="journal article" date="2010" name="J. Allergy Clin. Immunol.">
        <title>Structure and function of immunoglobulins.</title>
        <authorList>
            <person name="Schroeder H.W. Jr."/>
            <person name="Cavacini L."/>
        </authorList>
    </citation>
    <scope>REVIEW ON IMMUNOGLOBULINS</scope>
</reference>
<reference key="9">
    <citation type="journal article" date="2012" name="Nat. Rev. Immunol.">
        <title>Molecular programming of B cell memory.</title>
        <authorList>
            <person name="McHeyzer-Williams M."/>
            <person name="Okitsu S."/>
            <person name="Wang N."/>
            <person name="McHeyzer-Williams L."/>
        </authorList>
    </citation>
    <scope>REVIEW ON FUNCTION</scope>
</reference>
<reference key="10">
    <citation type="journal article" date="2014" name="Front. Immunol.">
        <title>Immunoglobulin and T Cell Receptor Genes: IMGT((R)) and the Birth and Rise of Immunoinformatics.</title>
        <authorList>
            <person name="Lefranc M.P."/>
        </authorList>
    </citation>
    <scope>NOMENCLATURE</scope>
</reference>
<name>HV146_HUMAN</name>
<dbReference type="EMBL" id="J00240">
    <property type="protein sequence ID" value="AAA52988.1"/>
    <property type="molecule type" value="Genomic_DNA"/>
</dbReference>
<dbReference type="EMBL" id="AC244452">
    <property type="status" value="NOT_ANNOTATED_CDS"/>
    <property type="molecule type" value="Genomic_DNA"/>
</dbReference>
<dbReference type="PIR" id="A02024">
    <property type="entry name" value="HVHUHG"/>
</dbReference>
<dbReference type="PIR" id="A02025">
    <property type="entry name" value="HVHUMO"/>
</dbReference>
<dbReference type="EMDB" id="EMD-25162"/>
<dbReference type="EMDB" id="EMD-31624"/>
<dbReference type="EMDB" id="EMD-60281"/>
<dbReference type="SMR" id="P01743"/>
<dbReference type="FunCoup" id="P01743">
    <property type="interactions" value="370"/>
</dbReference>
<dbReference type="IntAct" id="P01743">
    <property type="interactions" value="2"/>
</dbReference>
<dbReference type="MINT" id="P01743"/>
<dbReference type="IMGT_GENE-DB" id="IGHV1-46"/>
<dbReference type="iPTMnet" id="P01743"/>
<dbReference type="PhosphoSitePlus" id="P01743"/>
<dbReference type="BioMuta" id="IGHV1-46"/>
<dbReference type="DMDM" id="123799"/>
<dbReference type="jPOST" id="P01743"/>
<dbReference type="MassIVE" id="P01743"/>
<dbReference type="Ensembl" id="ENST00000390622.2">
    <property type="protein sequence ID" value="ENSP00000375031.2"/>
    <property type="gene ID" value="ENSG00000211962.2"/>
</dbReference>
<dbReference type="Ensembl" id="ENST00000632105.1">
    <property type="protein sequence ID" value="ENSP00000488713.1"/>
    <property type="gene ID" value="ENSG00000282131.1"/>
</dbReference>
<dbReference type="AGR" id="HGNC:5554"/>
<dbReference type="GeneCards" id="IGHV1-46"/>
<dbReference type="HGNC" id="HGNC:5554">
    <property type="gene designation" value="IGHV1-46"/>
</dbReference>
<dbReference type="HPA" id="ENSG00000211962">
    <property type="expression patterns" value="Group enriched (intestine, lung, salivary gland)"/>
</dbReference>
<dbReference type="neXtProt" id="NX_P01743"/>
<dbReference type="OpenTargets" id="ENSG00000211962"/>
<dbReference type="VEuPathDB" id="HostDB:ENSG00000211962"/>
<dbReference type="GeneTree" id="ENSGT00950000183013"/>
<dbReference type="InParanoid" id="P01743"/>
<dbReference type="OMA" id="EWMGIIN"/>
<dbReference type="OrthoDB" id="9901223at2759"/>
<dbReference type="PAN-GO" id="P01743">
    <property type="GO annotations" value="11 GO annotations based on evolutionary models"/>
</dbReference>
<dbReference type="PhylomeDB" id="P01743"/>
<dbReference type="PathwayCommons" id="P01743"/>
<dbReference type="Reactome" id="R-HSA-166663">
    <property type="pathway name" value="Initial triggering of complement"/>
</dbReference>
<dbReference type="Reactome" id="R-HSA-173623">
    <property type="pathway name" value="Classical antibody-mediated complement activation"/>
</dbReference>
<dbReference type="Reactome" id="R-HSA-198933">
    <property type="pathway name" value="Immunoregulatory interactions between a Lymphoid and a non-Lymphoid cell"/>
</dbReference>
<dbReference type="Reactome" id="R-HSA-202733">
    <property type="pathway name" value="Cell surface interactions at the vascular wall"/>
</dbReference>
<dbReference type="Reactome" id="R-HSA-2029481">
    <property type="pathway name" value="FCGR activation"/>
</dbReference>
<dbReference type="Reactome" id="R-HSA-2029482">
    <property type="pathway name" value="Regulation of actin dynamics for phagocytic cup formation"/>
</dbReference>
<dbReference type="Reactome" id="R-HSA-2029485">
    <property type="pathway name" value="Role of phospholipids in phagocytosis"/>
</dbReference>
<dbReference type="Reactome" id="R-HSA-2168880">
    <property type="pathway name" value="Scavenging of heme from plasma"/>
</dbReference>
<dbReference type="Reactome" id="R-HSA-2454202">
    <property type="pathway name" value="Fc epsilon receptor (FCERI) signaling"/>
</dbReference>
<dbReference type="Reactome" id="R-HSA-2730905">
    <property type="pathway name" value="Role of LAT2/NTAL/LAB on calcium mobilization"/>
</dbReference>
<dbReference type="Reactome" id="R-HSA-2871796">
    <property type="pathway name" value="FCERI mediated MAPK activation"/>
</dbReference>
<dbReference type="Reactome" id="R-HSA-2871809">
    <property type="pathway name" value="FCERI mediated Ca+2 mobilization"/>
</dbReference>
<dbReference type="Reactome" id="R-HSA-2871837">
    <property type="pathway name" value="FCERI mediated NF-kB activation"/>
</dbReference>
<dbReference type="Reactome" id="R-HSA-5690714">
    <property type="pathway name" value="CD22 mediated BCR regulation"/>
</dbReference>
<dbReference type="Reactome" id="R-HSA-9664323">
    <property type="pathway name" value="FCGR3A-mediated IL10 synthesis"/>
</dbReference>
<dbReference type="Reactome" id="R-HSA-9664422">
    <property type="pathway name" value="FCGR3A-mediated phagocytosis"/>
</dbReference>
<dbReference type="Reactome" id="R-HSA-9679191">
    <property type="pathway name" value="Potential therapeutics for SARS"/>
</dbReference>
<dbReference type="Reactome" id="R-HSA-977606">
    <property type="pathway name" value="Regulation of Complement cascade"/>
</dbReference>
<dbReference type="Reactome" id="R-HSA-983695">
    <property type="pathway name" value="Antigen activates B Cell Receptor (BCR) leading to generation of second messengers"/>
</dbReference>
<dbReference type="ChiTaRS" id="IGHV1-46">
    <property type="organism name" value="human"/>
</dbReference>
<dbReference type="Pharos" id="P01743">
    <property type="development level" value="Tdark"/>
</dbReference>
<dbReference type="PRO" id="PR:P01743"/>
<dbReference type="Proteomes" id="UP000005640">
    <property type="component" value="Chromosome 14"/>
</dbReference>
<dbReference type="RNAct" id="P01743">
    <property type="molecule type" value="protein"/>
</dbReference>
<dbReference type="Bgee" id="ENSG00000211962">
    <property type="expression patterns" value="Expressed in lymph node and 84 other cell types or tissues"/>
</dbReference>
<dbReference type="GO" id="GO:0005576">
    <property type="term" value="C:extracellular region"/>
    <property type="evidence" value="ECO:0000304"/>
    <property type="project" value="Reactome"/>
</dbReference>
<dbReference type="GO" id="GO:0019814">
    <property type="term" value="C:immunoglobulin complex"/>
    <property type="evidence" value="ECO:0007669"/>
    <property type="project" value="UniProtKB-KW"/>
</dbReference>
<dbReference type="GO" id="GO:0005886">
    <property type="term" value="C:plasma membrane"/>
    <property type="evidence" value="ECO:0000304"/>
    <property type="project" value="Reactome"/>
</dbReference>
<dbReference type="GO" id="GO:0003823">
    <property type="term" value="F:antigen binding"/>
    <property type="evidence" value="ECO:0000318"/>
    <property type="project" value="GO_Central"/>
</dbReference>
<dbReference type="GO" id="GO:0006955">
    <property type="term" value="P:immune response"/>
    <property type="evidence" value="ECO:0000303"/>
    <property type="project" value="UniProtKB"/>
</dbReference>
<dbReference type="GO" id="GO:0016064">
    <property type="term" value="P:immunoglobulin mediated immune response"/>
    <property type="evidence" value="ECO:0000318"/>
    <property type="project" value="GO_Central"/>
</dbReference>
<dbReference type="CDD" id="cd04981">
    <property type="entry name" value="IgV_H"/>
    <property type="match status" value="1"/>
</dbReference>
<dbReference type="FunFam" id="2.60.40.10:FF:000556">
    <property type="entry name" value="Immunoglobulin heavy variable 7-81 (non-functional)"/>
    <property type="match status" value="1"/>
</dbReference>
<dbReference type="Gene3D" id="2.60.40.10">
    <property type="entry name" value="Immunoglobulins"/>
    <property type="match status" value="1"/>
</dbReference>
<dbReference type="InterPro" id="IPR007110">
    <property type="entry name" value="Ig-like_dom"/>
</dbReference>
<dbReference type="InterPro" id="IPR036179">
    <property type="entry name" value="Ig-like_dom_sf"/>
</dbReference>
<dbReference type="InterPro" id="IPR013783">
    <property type="entry name" value="Ig-like_fold"/>
</dbReference>
<dbReference type="InterPro" id="IPR013106">
    <property type="entry name" value="Ig_V-set"/>
</dbReference>
<dbReference type="InterPro" id="IPR050199">
    <property type="entry name" value="IgHV"/>
</dbReference>
<dbReference type="PANTHER" id="PTHR23266">
    <property type="entry name" value="IMMUNOGLOBULIN HEAVY CHAIN"/>
    <property type="match status" value="1"/>
</dbReference>
<dbReference type="Pfam" id="PF07686">
    <property type="entry name" value="V-set"/>
    <property type="match status" value="1"/>
</dbReference>
<dbReference type="SMART" id="SM00406">
    <property type="entry name" value="IGv"/>
    <property type="match status" value="1"/>
</dbReference>
<dbReference type="SUPFAM" id="SSF48726">
    <property type="entry name" value="Immunoglobulin"/>
    <property type="match status" value="1"/>
</dbReference>
<dbReference type="PROSITE" id="PS50835">
    <property type="entry name" value="IG_LIKE"/>
    <property type="match status" value="1"/>
</dbReference>
<proteinExistence type="evidence at protein level"/>
<sequence length="117" mass="12933">MDWTWRVFCLLAVAPGAHSQVQLVQSGAEVKKPGASVKVSCKASGYTFTSYYMHWVRQAPGQGLEWMGIINPSGGSTSYAQKFQGRVTMTRDTSTSTVYMELSSLRSEDTAVYYCAR</sequence>
<comment type="function">
    <text evidence="6 7 8 9">V region of the variable domain of immunoglobulin heavy chains that participates in the antigen recognition (PubMed:24600447). Immunoglobulins, also known as antibodies, are membrane-bound or secreted glycoproteins produced by B lymphocytes. In the recognition phase of humoral immunity, the membrane-bound immunoglobulins serve as receptors which, upon binding of a specific antigen, trigger the clonal expansion and differentiation of B lymphocytes into immunoglobulins-secreting plasma cells. Secreted immunoglobulins mediate the effector phase of humoral immunity, which results in the elimination of bound antigens (PubMed:20176268, PubMed:22158414). The antigen binding site is formed by the variable domain of one heavy chain, together with that of its associated light chain. Thus, each immunoglobulin has two antigen binding sites with remarkable affinity for a particular antigen. The variable domains are assembled by a process called V-(D)-J rearrangement and can then be subjected to somatic hypermutations which, after exposure to antigen and selection, allow affinity maturation for a particular antigen (PubMed:17576170, PubMed:20176268).</text>
</comment>
<comment type="subunit">
    <text evidence="7">Immunoglobulins are composed of two identical heavy chains and two identical light chains; disulfide-linked.</text>
</comment>
<comment type="subcellular location">
    <subcellularLocation>
        <location evidence="7 8">Secreted</location>
    </subcellularLocation>
    <subcellularLocation>
        <location evidence="7 8">Cell membrane</location>
    </subcellularLocation>
</comment>
<comment type="polymorphism">
    <text evidence="11">There are several alleles. The sequence shown is that of IMGT allele IGHV1-46*01.</text>
</comment>
<comment type="caution">
    <text evidence="11">For examples of full-length immunoglobulin heavy chains (of different isotypes) see AC P0DOX2, AC P0DOX3, AC P0DOX4, AC P0DOX5 and AC P0DOX6.</text>
</comment>
<keyword id="KW-1064">Adaptive immunity</keyword>
<keyword id="KW-1003">Cell membrane</keyword>
<keyword id="KW-0903">Direct protein sequencing</keyword>
<keyword id="KW-1015">Disulfide bond</keyword>
<keyword id="KW-0391">Immunity</keyword>
<keyword id="KW-1280">Immunoglobulin</keyword>
<keyword id="KW-0393">Immunoglobulin domain</keyword>
<keyword id="KW-0472">Membrane</keyword>
<keyword id="KW-1267">Proteomics identification</keyword>
<keyword id="KW-1185">Reference proteome</keyword>
<keyword id="KW-0964">Secreted</keyword>
<keyword id="KW-0732">Signal</keyword>
<evidence type="ECO:0000250" key="1">
    <source>
        <dbReference type="UniProtKB" id="P23083"/>
    </source>
</evidence>
<evidence type="ECO:0000255" key="2">
    <source>
        <dbReference type="PROSITE-ProRule" id="PRU00114"/>
    </source>
</evidence>
<evidence type="ECO:0000269" key="3">
    <source>
    </source>
</evidence>
<evidence type="ECO:0000269" key="4">
    <source>
    </source>
</evidence>
<evidence type="ECO:0000303" key="5">
    <source>
    </source>
</evidence>
<evidence type="ECO:0000303" key="6">
    <source>
    </source>
</evidence>
<evidence type="ECO:0000303" key="7">
    <source>
    </source>
</evidence>
<evidence type="ECO:0000303" key="8">
    <source>
    </source>
</evidence>
<evidence type="ECO:0000303" key="9">
    <source>
    </source>
</evidence>
<evidence type="ECO:0000303" key="10">
    <source ref="6"/>
</evidence>
<evidence type="ECO:0000305" key="11"/>
<evidence type="ECO:0000305" key="12">
    <source>
    </source>
</evidence>
<evidence type="ECO:0000305" key="13">
    <source>
    </source>
</evidence>
<evidence type="ECO:0000305" key="14">
    <source>
    </source>
</evidence>